<feature type="chain" id="PRO_0000360997" description="Rho guanine nucleotide exchange factor 15">
    <location>
        <begin position="1"/>
        <end position="849"/>
    </location>
</feature>
<feature type="domain" description="DH" evidence="2">
    <location>
        <begin position="425"/>
        <end position="609"/>
    </location>
</feature>
<feature type="region of interest" description="Disordered" evidence="3">
    <location>
        <begin position="1"/>
        <end position="146"/>
    </location>
</feature>
<feature type="region of interest" description="Disordered" evidence="3">
    <location>
        <begin position="159"/>
        <end position="202"/>
    </location>
</feature>
<feature type="region of interest" description="Disordered" evidence="3">
    <location>
        <begin position="277"/>
        <end position="308"/>
    </location>
</feature>
<feature type="region of interest" description="Disordered" evidence="3">
    <location>
        <begin position="771"/>
        <end position="803"/>
    </location>
</feature>
<feature type="region of interest" description="Disordered" evidence="3">
    <location>
        <begin position="819"/>
        <end position="849"/>
    </location>
</feature>
<feature type="compositionally biased region" description="Basic residues" evidence="3">
    <location>
        <begin position="18"/>
        <end position="31"/>
    </location>
</feature>
<feature type="compositionally biased region" description="Polar residues" evidence="3">
    <location>
        <begin position="48"/>
        <end position="59"/>
    </location>
</feature>
<feature type="compositionally biased region" description="Low complexity" evidence="3">
    <location>
        <begin position="65"/>
        <end position="110"/>
    </location>
</feature>
<feature type="compositionally biased region" description="Pro residues" evidence="3">
    <location>
        <begin position="111"/>
        <end position="123"/>
    </location>
</feature>
<feature type="compositionally biased region" description="Polar residues" evidence="3">
    <location>
        <begin position="164"/>
        <end position="180"/>
    </location>
</feature>
<feature type="compositionally biased region" description="Polar residues" evidence="3">
    <location>
        <begin position="771"/>
        <end position="786"/>
    </location>
</feature>
<feature type="compositionally biased region" description="Polar residues" evidence="3">
    <location>
        <begin position="840"/>
        <end position="849"/>
    </location>
</feature>
<feature type="modified residue" description="Phosphoserine" evidence="7">
    <location>
        <position position="107"/>
    </location>
</feature>
<feature type="modified residue" description="Phosphoserine" evidence="7">
    <location>
        <position position="109"/>
    </location>
</feature>
<feature type="modified residue" description="Phosphotyrosine; by EPHB2" evidence="6">
    <location>
        <position position="361"/>
    </location>
</feature>
<feature type="splice variant" id="VSP_036209" description="In isoform 2." evidence="5">
    <original>GWLK</original>
    <variation>EAEG</variation>
    <location>
        <begin position="800"/>
        <end position="803"/>
    </location>
</feature>
<feature type="splice variant" id="VSP_036210" description="In isoform 2." evidence="5">
    <location>
        <begin position="804"/>
        <end position="849"/>
    </location>
</feature>
<feature type="mutagenesis site" description="Abolishes phosphorylation by EPHB2." evidence="4">
    <original>Y</original>
    <variation>A</variation>
    <location>
        <position position="361"/>
    </location>
</feature>
<feature type="mutagenesis site" description="No effect on RHOA activation; when associated with 554-A-A-555." evidence="4">
    <original>QS</original>
    <variation>AA</variation>
    <location>
        <begin position="547"/>
        <end position="548"/>
    </location>
</feature>
<feature type="mutagenesis site" description="No effect on RHOA activation; when associated with 547-A-A-548." evidence="4">
    <original>RL</original>
    <variation>AA</variation>
    <location>
        <begin position="554"/>
        <end position="555"/>
    </location>
</feature>
<feature type="mutagenesis site" description="Impairs RHOA activation; when associated with 566-A-A-567." evidence="4">
    <original>L</original>
    <variation>A</variation>
    <location>
        <position position="562"/>
    </location>
</feature>
<feature type="mutagenesis site" description="Impairs RHOA activation; when associated with A-562." evidence="4">
    <original>QR</original>
    <variation>AA</variation>
    <location>
        <begin position="566"/>
        <end position="567"/>
    </location>
</feature>
<reference key="1">
    <citation type="journal article" date="2009" name="PLoS Biol.">
        <title>Lineage-specific biology revealed by a finished genome assembly of the mouse.</title>
        <authorList>
            <person name="Church D.M."/>
            <person name="Goodstadt L."/>
            <person name="Hillier L.W."/>
            <person name="Zody M.C."/>
            <person name="Goldstein S."/>
            <person name="She X."/>
            <person name="Bult C.J."/>
            <person name="Agarwala R."/>
            <person name="Cherry J.L."/>
            <person name="DiCuccio M."/>
            <person name="Hlavina W."/>
            <person name="Kapustin Y."/>
            <person name="Meric P."/>
            <person name="Maglott D."/>
            <person name="Birtle Z."/>
            <person name="Marques A.C."/>
            <person name="Graves T."/>
            <person name="Zhou S."/>
            <person name="Teague B."/>
            <person name="Potamousis K."/>
            <person name="Churas C."/>
            <person name="Place M."/>
            <person name="Herschleb J."/>
            <person name="Runnheim R."/>
            <person name="Forrest D."/>
            <person name="Amos-Landgraf J."/>
            <person name="Schwartz D.C."/>
            <person name="Cheng Z."/>
            <person name="Lindblad-Toh K."/>
            <person name="Eichler E.E."/>
            <person name="Ponting C.P."/>
        </authorList>
    </citation>
    <scope>NUCLEOTIDE SEQUENCE [LARGE SCALE GENOMIC DNA]</scope>
    <source>
        <strain>C57BL/6J</strain>
    </source>
</reference>
<reference key="2">
    <citation type="journal article" date="2004" name="Genome Res.">
        <title>The status, quality, and expansion of the NIH full-length cDNA project: the Mammalian Gene Collection (MGC).</title>
        <authorList>
            <consortium name="The MGC Project Team"/>
        </authorList>
    </citation>
    <scope>NUCLEOTIDE SEQUENCE [LARGE SCALE MRNA] (ISOFORMS 1 AND 2)</scope>
    <source>
        <strain>C57BL/6J</strain>
        <tissue>Brain</tissue>
    </source>
</reference>
<reference key="3">
    <citation type="journal article" date="2004" name="DNA Res.">
        <title>Prediction of the coding sequences of mouse homologues of KIAA gene: IV. The complete nucleotide sequences of 500 mouse KIAA-homologous cDNAs identified by screening of terminal sequences of cDNA clones randomly sampled from size-fractionated libraries.</title>
        <authorList>
            <person name="Okazaki N."/>
            <person name="Kikuno R."/>
            <person name="Ohara R."/>
            <person name="Inamoto S."/>
            <person name="Koseki H."/>
            <person name="Hiraoka S."/>
            <person name="Saga Y."/>
            <person name="Seino S."/>
            <person name="Nishimura M."/>
            <person name="Kaisho T."/>
            <person name="Hoshino K."/>
            <person name="Kitamura H."/>
            <person name="Nagase T."/>
            <person name="Ohara O."/>
            <person name="Koga H."/>
        </authorList>
    </citation>
    <scope>NUCLEOTIDE SEQUENCE [LARGE SCALE MRNA] OF 412-849 (ISOFORM 1)</scope>
    <source>
        <tissue>Pancreatic islet</tissue>
    </source>
</reference>
<reference key="4">
    <citation type="journal article" date="2005" name="Neuron">
        <title>Eph-dependent tyrosine phosphorylation of ephexin1 modulates growth cone collapse.</title>
        <authorList>
            <person name="Sahin M."/>
            <person name="Greer P.L."/>
            <person name="Lin M.Z."/>
            <person name="Poucher H."/>
            <person name="Eberhart J."/>
            <person name="Schmidt S."/>
            <person name="Wright T.M."/>
            <person name="Shamah S.M."/>
            <person name="O'connell S."/>
            <person name="Cowan C.W."/>
            <person name="Hu L."/>
            <person name="Goldberg J.L."/>
            <person name="Debant A."/>
            <person name="Corfas G."/>
            <person name="Krull C.E."/>
            <person name="Greenberg M.E."/>
        </authorList>
    </citation>
    <scope>IDENTIFICATION</scope>
</reference>
<reference key="5">
    <citation type="journal article" date="2007" name="Proc. Natl. Acad. Sci. U.S.A.">
        <title>Large-scale phosphorylation analysis of mouse liver.</title>
        <authorList>
            <person name="Villen J."/>
            <person name="Beausoleil S.A."/>
            <person name="Gerber S.A."/>
            <person name="Gygi S.P."/>
        </authorList>
    </citation>
    <scope>IDENTIFICATION BY MASS SPECTROMETRY [LARGE SCALE ANALYSIS]</scope>
    <source>
        <tissue>Liver</tissue>
    </source>
</reference>
<reference key="6">
    <citation type="journal article" date="2010" name="Cell">
        <title>A tissue-specific atlas of mouse protein phosphorylation and expression.</title>
        <authorList>
            <person name="Huttlin E.L."/>
            <person name="Jedrychowski M.P."/>
            <person name="Elias J.E."/>
            <person name="Goswami T."/>
            <person name="Rad R."/>
            <person name="Beausoleil S.A."/>
            <person name="Villen J."/>
            <person name="Haas W."/>
            <person name="Sowa M.E."/>
            <person name="Gygi S.P."/>
        </authorList>
    </citation>
    <scope>PHOSPHORYLATION [LARGE SCALE ANALYSIS] AT SER-107 AND SER-109</scope>
    <scope>IDENTIFICATION BY MASS SPECTROMETRY [LARGE SCALE ANALYSIS]</scope>
    <source>
        <tissue>Kidney</tissue>
    </source>
</reference>
<reference key="7">
    <citation type="journal article" date="2010" name="Cell">
        <title>EphB-mediated degradation of the RhoA GEF Ephexin5 relieves a developmental brake on excitatory synapse formation.</title>
        <authorList>
            <person name="Margolis S.S."/>
            <person name="Salogiannis J."/>
            <person name="Lipton D.M."/>
            <person name="Mandel-Brehm C."/>
            <person name="Wills Z.P."/>
            <person name="Mardinly A.R."/>
            <person name="Hu L."/>
            <person name="Greer P.L."/>
            <person name="Bikoff J.B."/>
            <person name="Ho H.Y."/>
            <person name="Soskis M.J."/>
            <person name="Sahin M."/>
            <person name="Greenberg M.E."/>
        </authorList>
    </citation>
    <scope>FUNCTION</scope>
    <scope>INTERACTION WITH EPHB2</scope>
    <scope>SUBCELLULAR LOCATION</scope>
    <scope>TISSUE SPECIFICITY</scope>
    <scope>DEVELOPMENTAL STAGE</scope>
    <scope>DISRUPTION PHENOTYPE</scope>
    <scope>PHOSPHORYLATION AT TYR-361</scope>
    <scope>UBIQUITINATION</scope>
    <scope>MUTAGENESIS OF TYR-361; 547-GLU-SER-548; 554-ARG-LEU-555; LEU-562 AND 566-GLU-ARG-567</scope>
</reference>
<dbReference type="EMBL" id="AL603662">
    <property type="status" value="NOT_ANNOTATED_CDS"/>
    <property type="molecule type" value="Genomic_DNA"/>
</dbReference>
<dbReference type="EMBL" id="BC089365">
    <property type="protein sequence ID" value="AAH89365.1"/>
    <property type="molecule type" value="mRNA"/>
</dbReference>
<dbReference type="EMBL" id="BC116343">
    <property type="protein sequence ID" value="AAI16344.1"/>
    <property type="molecule type" value="mRNA"/>
</dbReference>
<dbReference type="EMBL" id="BC116344">
    <property type="protein sequence ID" value="AAI16345.1"/>
    <property type="molecule type" value="mRNA"/>
</dbReference>
<dbReference type="EMBL" id="AK173061">
    <property type="protein sequence ID" value="BAD32339.1"/>
    <property type="molecule type" value="mRNA"/>
</dbReference>
<dbReference type="CCDS" id="CCDS24873.1">
    <molecule id="Q5FWH6-1"/>
</dbReference>
<dbReference type="RefSeq" id="NP_001351701.1">
    <molecule id="Q5FWH6-2"/>
    <property type="nucleotide sequence ID" value="NM_001364772.2"/>
</dbReference>
<dbReference type="RefSeq" id="NP_808234.2">
    <molecule id="Q5FWH6-1"/>
    <property type="nucleotide sequence ID" value="NM_177566.5"/>
</dbReference>
<dbReference type="RefSeq" id="XP_006533727.1">
    <molecule id="Q5FWH6-1"/>
    <property type="nucleotide sequence ID" value="XM_006533664.2"/>
</dbReference>
<dbReference type="RefSeq" id="XP_006533729.1">
    <property type="nucleotide sequence ID" value="XM_006533666.2"/>
</dbReference>
<dbReference type="SMR" id="Q5FWH6"/>
<dbReference type="BioGRID" id="243010">
    <property type="interactions" value="2"/>
</dbReference>
<dbReference type="FunCoup" id="Q5FWH6">
    <property type="interactions" value="137"/>
</dbReference>
<dbReference type="IntAct" id="Q5FWH6">
    <property type="interactions" value="1"/>
</dbReference>
<dbReference type="STRING" id="10090.ENSMUSP00000104311"/>
<dbReference type="GlyGen" id="Q5FWH6">
    <property type="glycosylation" value="5 sites"/>
</dbReference>
<dbReference type="iPTMnet" id="Q5FWH6"/>
<dbReference type="PhosphoSitePlus" id="Q5FWH6"/>
<dbReference type="jPOST" id="Q5FWH6"/>
<dbReference type="PaxDb" id="10090-ENSMUSP00000104311"/>
<dbReference type="ProteomicsDB" id="273930">
    <molecule id="Q5FWH6-1"/>
</dbReference>
<dbReference type="ProteomicsDB" id="273931">
    <molecule id="Q5FWH6-2"/>
</dbReference>
<dbReference type="Antibodypedia" id="24648">
    <property type="antibodies" value="32 antibodies from 13 providers"/>
</dbReference>
<dbReference type="DNASU" id="442801"/>
<dbReference type="Ensembl" id="ENSMUST00000065040.13">
    <molecule id="Q5FWH6-1"/>
    <property type="protein sequence ID" value="ENSMUSP00000067684.7"/>
    <property type="gene ID" value="ENSMUSG00000052921.14"/>
</dbReference>
<dbReference type="Ensembl" id="ENSMUST00000108671.2">
    <molecule id="Q5FWH6-1"/>
    <property type="protein sequence ID" value="ENSMUSP00000104311.2"/>
    <property type="gene ID" value="ENSMUSG00000052921.14"/>
</dbReference>
<dbReference type="GeneID" id="442801"/>
<dbReference type="KEGG" id="mmu:442801"/>
<dbReference type="UCSC" id="uc007jol.1">
    <molecule id="Q5FWH6-1"/>
    <property type="organism name" value="mouse"/>
</dbReference>
<dbReference type="UCSC" id="uc007jom.1">
    <molecule id="Q5FWH6-2"/>
    <property type="organism name" value="mouse"/>
</dbReference>
<dbReference type="AGR" id="MGI:3045246"/>
<dbReference type="CTD" id="22899"/>
<dbReference type="MGI" id="MGI:3045246">
    <property type="gene designation" value="Arhgef15"/>
</dbReference>
<dbReference type="VEuPathDB" id="HostDB:ENSMUSG00000052921"/>
<dbReference type="eggNOG" id="KOG3523">
    <property type="taxonomic scope" value="Eukaryota"/>
</dbReference>
<dbReference type="GeneTree" id="ENSGT01030000234571"/>
<dbReference type="HOGENOM" id="CLU_012820_3_0_1"/>
<dbReference type="InParanoid" id="Q5FWH6"/>
<dbReference type="OMA" id="QGCPTHR"/>
<dbReference type="OrthoDB" id="27593at2759"/>
<dbReference type="PhylomeDB" id="Q5FWH6"/>
<dbReference type="TreeFam" id="TF316357"/>
<dbReference type="Reactome" id="R-MMU-193648">
    <property type="pathway name" value="NRAGE signals death through JNK"/>
</dbReference>
<dbReference type="Reactome" id="R-MMU-416482">
    <property type="pathway name" value="G alpha (12/13) signalling events"/>
</dbReference>
<dbReference type="Reactome" id="R-MMU-8980692">
    <property type="pathway name" value="RHOA GTPase cycle"/>
</dbReference>
<dbReference type="Reactome" id="R-MMU-9013148">
    <property type="pathway name" value="CDC42 GTPase cycle"/>
</dbReference>
<dbReference type="Reactome" id="R-MMU-9013149">
    <property type="pathway name" value="RAC1 GTPase cycle"/>
</dbReference>
<dbReference type="BioGRID-ORCS" id="442801">
    <property type="hits" value="4 hits in 77 CRISPR screens"/>
</dbReference>
<dbReference type="ChiTaRS" id="Arhgef15">
    <property type="organism name" value="mouse"/>
</dbReference>
<dbReference type="PRO" id="PR:Q5FWH6"/>
<dbReference type="Proteomes" id="UP000000589">
    <property type="component" value="Chromosome 11"/>
</dbReference>
<dbReference type="RNAct" id="Q5FWH6">
    <property type="molecule type" value="protein"/>
</dbReference>
<dbReference type="Bgee" id="ENSMUSG00000052921">
    <property type="expression patterns" value="Expressed in superior cervical ganglion and 186 other cell types or tissues"/>
</dbReference>
<dbReference type="GO" id="GO:0005737">
    <property type="term" value="C:cytoplasm"/>
    <property type="evidence" value="ECO:0000250"/>
    <property type="project" value="UniProtKB"/>
</dbReference>
<dbReference type="GO" id="GO:0030425">
    <property type="term" value="C:dendrite"/>
    <property type="evidence" value="ECO:0000314"/>
    <property type="project" value="UniProtKB"/>
</dbReference>
<dbReference type="GO" id="GO:0098978">
    <property type="term" value="C:glutamatergic synapse"/>
    <property type="evidence" value="ECO:0000314"/>
    <property type="project" value="SynGO"/>
</dbReference>
<dbReference type="GO" id="GO:0098794">
    <property type="term" value="C:postsynapse"/>
    <property type="evidence" value="ECO:0000314"/>
    <property type="project" value="SynGO"/>
</dbReference>
<dbReference type="GO" id="GO:0005096">
    <property type="term" value="F:GTPase activator activity"/>
    <property type="evidence" value="ECO:0007669"/>
    <property type="project" value="UniProtKB-KW"/>
</dbReference>
<dbReference type="GO" id="GO:0005085">
    <property type="term" value="F:guanyl-nucleotide exchange factor activity"/>
    <property type="evidence" value="ECO:0000314"/>
    <property type="project" value="UniProtKB"/>
</dbReference>
<dbReference type="GO" id="GO:2000297">
    <property type="term" value="P:negative regulation of synapse maturation"/>
    <property type="evidence" value="ECO:0000315"/>
    <property type="project" value="UniProtKB"/>
</dbReference>
<dbReference type="GO" id="GO:0051496">
    <property type="term" value="P:positive regulation of stress fiber assembly"/>
    <property type="evidence" value="ECO:0000250"/>
    <property type="project" value="UniProtKB"/>
</dbReference>
<dbReference type="GO" id="GO:0150052">
    <property type="term" value="P:regulation of postsynapse assembly"/>
    <property type="evidence" value="ECO:0000314"/>
    <property type="project" value="SynGO"/>
</dbReference>
<dbReference type="GO" id="GO:0061299">
    <property type="term" value="P:retina vasculature morphogenesis in camera-type eye"/>
    <property type="evidence" value="ECO:0000315"/>
    <property type="project" value="MGI"/>
</dbReference>
<dbReference type="CDD" id="cd01221">
    <property type="entry name" value="PH_ephexin"/>
    <property type="match status" value="1"/>
</dbReference>
<dbReference type="CDD" id="cd00160">
    <property type="entry name" value="RhoGEF"/>
    <property type="match status" value="1"/>
</dbReference>
<dbReference type="FunFam" id="1.20.900.10:FF:000007">
    <property type="entry name" value="rho guanine nucleotide exchange factor 19"/>
    <property type="match status" value="1"/>
</dbReference>
<dbReference type="Gene3D" id="1.20.900.10">
    <property type="entry name" value="Dbl homology (DH) domain"/>
    <property type="match status" value="1"/>
</dbReference>
<dbReference type="Gene3D" id="2.30.29.30">
    <property type="entry name" value="Pleckstrin-homology domain (PH domain)/Phosphotyrosine-binding domain (PTB)"/>
    <property type="match status" value="1"/>
</dbReference>
<dbReference type="InterPro" id="IPR035899">
    <property type="entry name" value="DBL_dom_sf"/>
</dbReference>
<dbReference type="InterPro" id="IPR000219">
    <property type="entry name" value="DH_dom"/>
</dbReference>
<dbReference type="InterPro" id="IPR047271">
    <property type="entry name" value="Ephexin-like"/>
</dbReference>
<dbReference type="InterPro" id="IPR011993">
    <property type="entry name" value="PH-like_dom_sf"/>
</dbReference>
<dbReference type="InterPro" id="IPR047270">
    <property type="entry name" value="PH_ephexin"/>
</dbReference>
<dbReference type="PANTHER" id="PTHR12845">
    <property type="entry name" value="GUANINE NUCLEOTIDE EXCHANGE FACTOR"/>
    <property type="match status" value="1"/>
</dbReference>
<dbReference type="PANTHER" id="PTHR12845:SF7">
    <property type="entry name" value="RHO GUANINE NUCLEOTIDE EXCHANGE FACTOR 15"/>
    <property type="match status" value="1"/>
</dbReference>
<dbReference type="Pfam" id="PF00621">
    <property type="entry name" value="RhoGEF"/>
    <property type="match status" value="1"/>
</dbReference>
<dbReference type="SMART" id="SM00325">
    <property type="entry name" value="RhoGEF"/>
    <property type="match status" value="1"/>
</dbReference>
<dbReference type="SUPFAM" id="SSF48065">
    <property type="entry name" value="DBL homology domain (DH-domain)"/>
    <property type="match status" value="1"/>
</dbReference>
<dbReference type="SUPFAM" id="SSF50729">
    <property type="entry name" value="PH domain-like"/>
    <property type="match status" value="1"/>
</dbReference>
<dbReference type="PROSITE" id="PS50010">
    <property type="entry name" value="DH_2"/>
    <property type="match status" value="1"/>
</dbReference>
<accession>Q5FWH6</accession>
<accession>Q14B44</accession>
<accession>Q69ZV7</accession>
<organism>
    <name type="scientific">Mus musculus</name>
    <name type="common">Mouse</name>
    <dbReference type="NCBI Taxonomy" id="10090"/>
    <lineage>
        <taxon>Eukaryota</taxon>
        <taxon>Metazoa</taxon>
        <taxon>Chordata</taxon>
        <taxon>Craniata</taxon>
        <taxon>Vertebrata</taxon>
        <taxon>Euteleostomi</taxon>
        <taxon>Mammalia</taxon>
        <taxon>Eutheria</taxon>
        <taxon>Euarchontoglires</taxon>
        <taxon>Glires</taxon>
        <taxon>Rodentia</taxon>
        <taxon>Myomorpha</taxon>
        <taxon>Muroidea</taxon>
        <taxon>Muridae</taxon>
        <taxon>Murinae</taxon>
        <taxon>Mus</taxon>
        <taxon>Mus</taxon>
    </lineage>
</organism>
<comment type="function">
    <text evidence="4">Specific GEF for RhoA activation. Does not activate RAC1 or CDC42. Regulates vascular smooth muscle contractility. Negatively regulates excitatory synapse development by suppressing the synapse-promoting activity of EPHB2.</text>
</comment>
<comment type="subunit">
    <text evidence="1 4">Interacts with EPHA4 (By similarity). Interacts with EPHB2.</text>
</comment>
<comment type="interaction">
    <interactant intactId="EBI-2943608">
        <id>Q5FWH6-2</id>
    </interactant>
    <interactant intactId="EBI-537711">
        <id>P54763</id>
        <label>Ephb2</label>
    </interactant>
    <organismsDiffer>false</organismsDiffer>
    <experiments>3</experiments>
</comment>
<comment type="subcellular location">
    <subcellularLocation>
        <location evidence="4">Cell projection</location>
        <location evidence="4">Dendrite</location>
    </subcellularLocation>
    <text>Expressed exclusively in dendrites of the developing hippocampus.</text>
</comment>
<comment type="alternative products">
    <event type="alternative splicing"/>
    <isoform>
        <id>Q5FWH6-1</id>
        <name>1</name>
        <sequence type="displayed"/>
    </isoform>
    <isoform>
        <id>Q5FWH6-2</id>
        <name>2</name>
        <sequence type="described" ref="VSP_036209 VSP_036210"/>
    </isoform>
</comment>
<comment type="tissue specificity">
    <text evidence="4">At P12, expressed is detected in the CA1 region and the dentate gyrus of the hippocampus.</text>
</comment>
<comment type="developmental stage">
    <text evidence="4">Highest levels in hippocampus are found at postnatal day 3 prior to maximal synapse formation and decrease as synapse formation peaks in the postnatal period (at protein level).</text>
</comment>
<comment type="PTM">
    <text evidence="4">Phosphorylated on tyrosine residues upon EFNA1 stimulation. EPHB2-dependent phosphorylation at Tyr-361 triggers UBE3A-mediated ubiquitination.</text>
</comment>
<comment type="PTM">
    <text evidence="4">Ubiquitinated; UBE3A-mediated ubiquitination and degradation by the proteasome promotes EFNB1-dependent synapse formation.</text>
</comment>
<comment type="disruption phenotype">
    <text evidence="4">Significant decrease in RHOA activation in brain extracts.</text>
</comment>
<comment type="miscellaneous">
    <text>In a mouse model of Angelman syndrome where Ube3a levels are reduced, levels of Arhgef15 are significantly increased and ubiquitination is reduced compared to wild-type litter mates.</text>
</comment>
<proteinExistence type="evidence at protein level"/>
<name>ARHGF_MOUSE</name>
<gene>
    <name type="primary">Arhgef15</name>
    <name type="synonym">Kiaa0915</name>
</gene>
<evidence type="ECO:0000250" key="1"/>
<evidence type="ECO:0000255" key="2">
    <source>
        <dbReference type="PROSITE-ProRule" id="PRU00062"/>
    </source>
</evidence>
<evidence type="ECO:0000256" key="3">
    <source>
        <dbReference type="SAM" id="MobiDB-lite"/>
    </source>
</evidence>
<evidence type="ECO:0000269" key="4">
    <source>
    </source>
</evidence>
<evidence type="ECO:0000303" key="5">
    <source>
    </source>
</evidence>
<evidence type="ECO:0000305" key="6">
    <source>
    </source>
</evidence>
<evidence type="ECO:0007744" key="7">
    <source>
    </source>
</evidence>
<keyword id="KW-0025">Alternative splicing</keyword>
<keyword id="KW-0966">Cell projection</keyword>
<keyword id="KW-0343">GTPase activation</keyword>
<keyword id="KW-0344">Guanine-nucleotide releasing factor</keyword>
<keyword id="KW-0597">Phosphoprotein</keyword>
<keyword id="KW-1185">Reference proteome</keyword>
<keyword id="KW-0832">Ubl conjugation</keyword>
<sequence>MSAQSLPAATPPTLKPPRIIRPRPPSRHRAPHSPGPLHNGSSPKALPQISNDASASVCTSIFWEPPTASLKPPALLPPSVSRTSLDSQTSPDSPSSTPSPSPVSRRSISPEPAPCSPVPPPKPSGSSRTPLPSGPTPLQDGSASAPGTVRRLAGKFEWGAEGKAQSSDSLERCSQGSTEVNGEKETPEAALSGNGSQENGTPDAALACPPCCPCVCHVAKPGLELRWVPVGSSEDILRIPCRASPLRASRSRINPPVISHPPVVLTSYRSTAERKLLPPLKPPKPTKVRQDISTSEELPQPDLKLPSEDGIQTATKAWEGDRPEGAPLNAPPVALEGREEEGLDGLKGLQWELPLQDEPLYQTYRAAVLSEELWGVGEDGGPSPANPGEAPTFSRLPGPRNTLWQELPAVRGSGLLESLSPQERRMQESLFEVVTSEASYLRSLRLLTDTFVLSQALRDTLTPRDHHTLFSNVQRVQSVSERFLGTLLSRVRSSPHITDLCDVVHAHAVGPFFVYVDYVRNQQYQEETYSRLMDTNVRFSAELRRLQSLPKCERLPLPSFLLLPFQRITRLRMLLQNILSQTEEGSSRQENAQKALGAVSKIIERCSAEVGRMKQTEELIRLTQRLRFHKVKALPLVSWSRRLELQGELTELGCRRGGVLFTSRPRFTPLCLLLFSDLLLITQPKSGQRLQVLDYAHRSLVQAQQVPDPSGPPTFRLSLLSNHQGRPTHRLLQAASLSDMQRWLGAFPTPGPLPCSPDTIYEDCECSQELCSEPSTPSKTEGQSLESKAPRKHLHKNPEGWLKGLPGAFPAQLVCEVTGEHERRKHLRQHQKLLEAVGPSSGTPDTPQP</sequence>
<protein>
    <recommendedName>
        <fullName>Rho guanine nucleotide exchange factor 15</fullName>
    </recommendedName>
    <alternativeName>
        <fullName>Ephexin-5</fullName>
        <shortName>E5</shortName>
    </alternativeName>
</protein>